<protein>
    <recommendedName>
        <fullName evidence="1">Ribosomal RNA small subunit methyltransferase A</fullName>
        <ecNumber evidence="1">2.1.1.182</ecNumber>
    </recommendedName>
    <alternativeName>
        <fullName evidence="1">16S rRNA (adenine(1518)-N(6)/adenine(1519)-N(6))-dimethyltransferase</fullName>
    </alternativeName>
    <alternativeName>
        <fullName evidence="1">16S rRNA dimethyladenosine transferase</fullName>
    </alternativeName>
    <alternativeName>
        <fullName evidence="1">16S rRNA dimethylase</fullName>
    </alternativeName>
    <alternativeName>
        <fullName evidence="1">S-adenosylmethionine-6-N', N'-adenosyl(rRNA) dimethyltransferase</fullName>
    </alternativeName>
</protein>
<evidence type="ECO:0000255" key="1">
    <source>
        <dbReference type="HAMAP-Rule" id="MF_00607"/>
    </source>
</evidence>
<name>RSMA_CLOB1</name>
<reference key="1">
    <citation type="journal article" date="2007" name="PLoS ONE">
        <title>Analysis of the neurotoxin complex genes in Clostridium botulinum A1-A4 and B1 strains: BoNT/A3, /Ba4 and /B1 clusters are located within plasmids.</title>
        <authorList>
            <person name="Smith T.J."/>
            <person name="Hill K.K."/>
            <person name="Foley B.T."/>
            <person name="Detter J.C."/>
            <person name="Munk A.C."/>
            <person name="Bruce D.C."/>
            <person name="Doggett N.A."/>
            <person name="Smith L.A."/>
            <person name="Marks J.D."/>
            <person name="Xie G."/>
            <person name="Brettin T.S."/>
        </authorList>
    </citation>
    <scope>NUCLEOTIDE SEQUENCE [LARGE SCALE GENOMIC DNA]</scope>
    <source>
        <strain>ATCC 19397 / Type A</strain>
    </source>
</reference>
<sequence length="275" mass="31813">MNTKEIVNKYEFKFNKNLGQNFLIDESVLEDIIEGAEINKEDTVIEIGPGVGTLTKELLERAKEVYSIELDGDLIPILQEELKEYNNFTLIHKDALKIDFNELMENKDSIKLVANLPYYVTTPIISRLLTEKCDFKSLTIMIQKEVAERINAEPNCKEYGSLTVLVQYYCNTKIIRKVSPNSFIPRPKVDSIVIKLDRLSEPRVRVKSQKLFFNVVRSSFNMRRKTLWNSLKSLNIDKESMENAFERAGIDPKRRGETLSIEEFGKLSDCIYDIL</sequence>
<proteinExistence type="inferred from homology"/>
<accession>A7FQA9</accession>
<comment type="function">
    <text evidence="1">Specifically dimethylates two adjacent adenosines (A1518 and A1519) in the loop of a conserved hairpin near the 3'-end of 16S rRNA in the 30S particle. May play a critical role in biogenesis of 30S subunits.</text>
</comment>
<comment type="catalytic activity">
    <reaction evidence="1">
        <text>adenosine(1518)/adenosine(1519) in 16S rRNA + 4 S-adenosyl-L-methionine = N(6)-dimethyladenosine(1518)/N(6)-dimethyladenosine(1519) in 16S rRNA + 4 S-adenosyl-L-homocysteine + 4 H(+)</text>
        <dbReference type="Rhea" id="RHEA:19609"/>
        <dbReference type="Rhea" id="RHEA-COMP:10232"/>
        <dbReference type="Rhea" id="RHEA-COMP:10233"/>
        <dbReference type="ChEBI" id="CHEBI:15378"/>
        <dbReference type="ChEBI" id="CHEBI:57856"/>
        <dbReference type="ChEBI" id="CHEBI:59789"/>
        <dbReference type="ChEBI" id="CHEBI:74411"/>
        <dbReference type="ChEBI" id="CHEBI:74493"/>
        <dbReference type="EC" id="2.1.1.182"/>
    </reaction>
</comment>
<comment type="subcellular location">
    <subcellularLocation>
        <location evidence="1">Cytoplasm</location>
    </subcellularLocation>
</comment>
<comment type="similarity">
    <text evidence="1">Belongs to the class I-like SAM-binding methyltransferase superfamily. rRNA adenine N(6)-methyltransferase family. RsmA subfamily.</text>
</comment>
<organism>
    <name type="scientific">Clostridium botulinum (strain ATCC 19397 / Type A)</name>
    <dbReference type="NCBI Taxonomy" id="441770"/>
    <lineage>
        <taxon>Bacteria</taxon>
        <taxon>Bacillati</taxon>
        <taxon>Bacillota</taxon>
        <taxon>Clostridia</taxon>
        <taxon>Eubacteriales</taxon>
        <taxon>Clostridiaceae</taxon>
        <taxon>Clostridium</taxon>
    </lineage>
</organism>
<dbReference type="EC" id="2.1.1.182" evidence="1"/>
<dbReference type="EMBL" id="CP000726">
    <property type="protein sequence ID" value="ABS33045.1"/>
    <property type="molecule type" value="Genomic_DNA"/>
</dbReference>
<dbReference type="RefSeq" id="WP_011986025.1">
    <property type="nucleotide sequence ID" value="NC_009697.1"/>
</dbReference>
<dbReference type="SMR" id="A7FQA9"/>
<dbReference type="GeneID" id="5184336"/>
<dbReference type="KEGG" id="cba:CLB_0116"/>
<dbReference type="HOGENOM" id="CLU_041220_0_0_9"/>
<dbReference type="GO" id="GO:0005829">
    <property type="term" value="C:cytosol"/>
    <property type="evidence" value="ECO:0007669"/>
    <property type="project" value="TreeGrafter"/>
</dbReference>
<dbReference type="GO" id="GO:0052908">
    <property type="term" value="F:16S rRNA (adenine(1518)-N(6)/adenine(1519)-N(6))-dimethyltransferase activity"/>
    <property type="evidence" value="ECO:0007669"/>
    <property type="project" value="UniProtKB-EC"/>
</dbReference>
<dbReference type="GO" id="GO:0003723">
    <property type="term" value="F:RNA binding"/>
    <property type="evidence" value="ECO:0007669"/>
    <property type="project" value="UniProtKB-KW"/>
</dbReference>
<dbReference type="CDD" id="cd02440">
    <property type="entry name" value="AdoMet_MTases"/>
    <property type="match status" value="1"/>
</dbReference>
<dbReference type="FunFam" id="1.10.8.100:FF:000001">
    <property type="entry name" value="Ribosomal RNA small subunit methyltransferase A"/>
    <property type="match status" value="1"/>
</dbReference>
<dbReference type="FunFam" id="3.40.50.150:FF:000023">
    <property type="entry name" value="Ribosomal RNA small subunit methyltransferase A"/>
    <property type="match status" value="1"/>
</dbReference>
<dbReference type="Gene3D" id="1.10.8.100">
    <property type="entry name" value="Ribosomal RNA adenine dimethylase-like, domain 2"/>
    <property type="match status" value="1"/>
</dbReference>
<dbReference type="Gene3D" id="3.40.50.150">
    <property type="entry name" value="Vaccinia Virus protein VP39"/>
    <property type="match status" value="1"/>
</dbReference>
<dbReference type="HAMAP" id="MF_00607">
    <property type="entry name" value="16SrRNA_methyltr_A"/>
    <property type="match status" value="1"/>
</dbReference>
<dbReference type="InterPro" id="IPR001737">
    <property type="entry name" value="KsgA/Erm"/>
</dbReference>
<dbReference type="InterPro" id="IPR023165">
    <property type="entry name" value="rRNA_Ade_diMease-like_C"/>
</dbReference>
<dbReference type="InterPro" id="IPR020596">
    <property type="entry name" value="rRNA_Ade_Mease_Trfase_CS"/>
</dbReference>
<dbReference type="InterPro" id="IPR020598">
    <property type="entry name" value="rRNA_Ade_methylase_Trfase_N"/>
</dbReference>
<dbReference type="InterPro" id="IPR011530">
    <property type="entry name" value="rRNA_adenine_dimethylase"/>
</dbReference>
<dbReference type="InterPro" id="IPR029063">
    <property type="entry name" value="SAM-dependent_MTases_sf"/>
</dbReference>
<dbReference type="NCBIfam" id="TIGR00755">
    <property type="entry name" value="ksgA"/>
    <property type="match status" value="1"/>
</dbReference>
<dbReference type="PANTHER" id="PTHR11727">
    <property type="entry name" value="DIMETHYLADENOSINE TRANSFERASE"/>
    <property type="match status" value="1"/>
</dbReference>
<dbReference type="PANTHER" id="PTHR11727:SF7">
    <property type="entry name" value="DIMETHYLADENOSINE TRANSFERASE-RELATED"/>
    <property type="match status" value="1"/>
</dbReference>
<dbReference type="Pfam" id="PF00398">
    <property type="entry name" value="RrnaAD"/>
    <property type="match status" value="1"/>
</dbReference>
<dbReference type="SMART" id="SM00650">
    <property type="entry name" value="rADc"/>
    <property type="match status" value="1"/>
</dbReference>
<dbReference type="SUPFAM" id="SSF53335">
    <property type="entry name" value="S-adenosyl-L-methionine-dependent methyltransferases"/>
    <property type="match status" value="1"/>
</dbReference>
<dbReference type="PROSITE" id="PS01131">
    <property type="entry name" value="RRNA_A_DIMETH"/>
    <property type="match status" value="1"/>
</dbReference>
<dbReference type="PROSITE" id="PS51689">
    <property type="entry name" value="SAM_RNA_A_N6_MT"/>
    <property type="match status" value="1"/>
</dbReference>
<gene>
    <name evidence="1" type="primary">rsmA</name>
    <name evidence="1" type="synonym">ksgA</name>
    <name type="ordered locus">CLB_0116</name>
</gene>
<feature type="chain" id="PRO_1000212237" description="Ribosomal RNA small subunit methyltransferase A">
    <location>
        <begin position="1"/>
        <end position="275"/>
    </location>
</feature>
<feature type="binding site" evidence="1">
    <location>
        <position position="21"/>
    </location>
    <ligand>
        <name>S-adenosyl-L-methionine</name>
        <dbReference type="ChEBI" id="CHEBI:59789"/>
    </ligand>
</feature>
<feature type="binding site" evidence="1">
    <location>
        <position position="23"/>
    </location>
    <ligand>
        <name>S-adenosyl-L-methionine</name>
        <dbReference type="ChEBI" id="CHEBI:59789"/>
    </ligand>
</feature>
<feature type="binding site" evidence="1">
    <location>
        <position position="48"/>
    </location>
    <ligand>
        <name>S-adenosyl-L-methionine</name>
        <dbReference type="ChEBI" id="CHEBI:59789"/>
    </ligand>
</feature>
<feature type="binding site" evidence="1">
    <location>
        <position position="69"/>
    </location>
    <ligand>
        <name>S-adenosyl-L-methionine</name>
        <dbReference type="ChEBI" id="CHEBI:59789"/>
    </ligand>
</feature>
<feature type="binding site" evidence="1">
    <location>
        <position position="94"/>
    </location>
    <ligand>
        <name>S-adenosyl-L-methionine</name>
        <dbReference type="ChEBI" id="CHEBI:59789"/>
    </ligand>
</feature>
<feature type="binding site" evidence="1">
    <location>
        <position position="115"/>
    </location>
    <ligand>
        <name>S-adenosyl-L-methionine</name>
        <dbReference type="ChEBI" id="CHEBI:59789"/>
    </ligand>
</feature>
<keyword id="KW-0963">Cytoplasm</keyword>
<keyword id="KW-0489">Methyltransferase</keyword>
<keyword id="KW-0694">RNA-binding</keyword>
<keyword id="KW-0698">rRNA processing</keyword>
<keyword id="KW-0949">S-adenosyl-L-methionine</keyword>
<keyword id="KW-0808">Transferase</keyword>